<name>KBTB4_HUMAN</name>
<feature type="chain" id="PRO_0000119080" description="Kelch repeat and BTB domain-containing protein 4">
    <location>
        <begin position="1"/>
        <end position="534"/>
    </location>
</feature>
<feature type="domain" description="BTB" evidence="2">
    <location>
        <begin position="61"/>
        <end position="128"/>
    </location>
</feature>
<feature type="domain" description="BACK">
    <location>
        <begin position="163"/>
        <end position="255"/>
    </location>
</feature>
<feature type="repeat" description="Kelch 1" evidence="1">
    <location>
        <begin position="255"/>
        <end position="301"/>
    </location>
</feature>
<feature type="repeat" description="Kelch 2" evidence="1">
    <location>
        <begin position="302"/>
        <end position="344"/>
    </location>
</feature>
<feature type="repeat" description="Kelch 3" evidence="1">
    <location>
        <begin position="347"/>
        <end position="394"/>
    </location>
</feature>
<feature type="repeat" description="Kelch 4" evidence="1">
    <location>
        <begin position="396"/>
        <end position="446"/>
    </location>
</feature>
<feature type="repeat" description="Kelch 5" evidence="1">
    <location>
        <begin position="448"/>
        <end position="497"/>
    </location>
</feature>
<feature type="region of interest" description="Disordered" evidence="3">
    <location>
        <begin position="1"/>
        <end position="25"/>
    </location>
</feature>
<feature type="splice variant" id="VSP_062360" description="In isoform 2." evidence="4 5 6 9">
    <location>
        <begin position="1"/>
        <end position="16"/>
    </location>
</feature>
<feature type="splice variant" id="VSP_062361" description="In isoform 3." evidence="4">
    <original>MKGGN</original>
    <variation>MAVNSSGYSRWCCF</variation>
    <location>
        <begin position="1"/>
        <end position="5"/>
    </location>
</feature>
<feature type="sequence variant" id="VAR_028046" description="In dbSNP:rs11039302.">
    <original>D</original>
    <variation>N</variation>
    <location>
        <position position="346"/>
    </location>
</feature>
<feature type="sequence conflict" description="In Ref. 1; BAA91616." evidence="10" ref="1">
    <original>I</original>
    <variation>T</variation>
    <location>
        <position position="211"/>
    </location>
</feature>
<feature type="sequence conflict" description="In Ref. 1; BAA91616." evidence="10" ref="1">
    <original>A</original>
    <variation>G</variation>
    <location>
        <position position="270"/>
    </location>
</feature>
<feature type="sequence conflict" description="In Ref. 1; BAA91616." evidence="10" ref="1">
    <original>C</original>
    <variation>R</variation>
    <location>
        <position position="459"/>
    </location>
</feature>
<feature type="sequence conflict" description="In Ref. 1; BAG52391." evidence="10" ref="1">
    <original>C</original>
    <variation>Y</variation>
    <location>
        <position position="488"/>
    </location>
</feature>
<feature type="sequence conflict" description="In Ref. 2; CAG33551." evidence="10" ref="2">
    <original>V</original>
    <variation>A</variation>
    <location>
        <position position="494"/>
    </location>
</feature>
<feature type="sequence conflict" description="In Ref. 1; BAA91616/BAA91880." evidence="10" ref="1">
    <original>V</original>
    <variation>I</variation>
    <location>
        <position position="516"/>
    </location>
</feature>
<feature type="strand" evidence="13">
    <location>
        <begin position="25"/>
        <end position="28"/>
    </location>
</feature>
<feature type="turn" evidence="15">
    <location>
        <begin position="31"/>
        <end position="33"/>
    </location>
</feature>
<feature type="strand" evidence="15">
    <location>
        <begin position="34"/>
        <end position="38"/>
    </location>
</feature>
<feature type="helix" evidence="15">
    <location>
        <begin position="42"/>
        <end position="55"/>
    </location>
</feature>
<feature type="strand" evidence="15">
    <location>
        <begin position="63"/>
        <end position="67"/>
    </location>
</feature>
<feature type="strand" evidence="15">
    <location>
        <begin position="70"/>
        <end position="74"/>
    </location>
</feature>
<feature type="helix" evidence="15">
    <location>
        <begin position="76"/>
        <end position="82"/>
    </location>
</feature>
<feature type="helix" evidence="15">
    <location>
        <begin position="84"/>
        <end position="91"/>
    </location>
</feature>
<feature type="turn" evidence="15">
    <location>
        <begin position="96"/>
        <end position="98"/>
    </location>
</feature>
<feature type="strand" evidence="15">
    <location>
        <begin position="102"/>
        <end position="104"/>
    </location>
</feature>
<feature type="helix" evidence="15">
    <location>
        <begin position="109"/>
        <end position="121"/>
    </location>
</feature>
<feature type="strand" evidence="15">
    <location>
        <begin position="122"/>
        <end position="127"/>
    </location>
</feature>
<feature type="helix" evidence="15">
    <location>
        <begin position="128"/>
        <end position="130"/>
    </location>
</feature>
<feature type="helix" evidence="15">
    <location>
        <begin position="131"/>
        <end position="141"/>
    </location>
</feature>
<feature type="helix" evidence="15">
    <location>
        <begin position="144"/>
        <end position="156"/>
    </location>
</feature>
<feature type="helix" evidence="13">
    <location>
        <begin position="160"/>
        <end position="162"/>
    </location>
</feature>
<feature type="helix" evidence="15">
    <location>
        <begin position="163"/>
        <end position="172"/>
    </location>
</feature>
<feature type="helix" evidence="15">
    <location>
        <begin position="176"/>
        <end position="188"/>
    </location>
</feature>
<feature type="helix" evidence="15">
    <location>
        <begin position="190"/>
        <end position="193"/>
    </location>
</feature>
<feature type="helix" evidence="15">
    <location>
        <begin position="197"/>
        <end position="200"/>
    </location>
</feature>
<feature type="helix" evidence="15">
    <location>
        <begin position="204"/>
        <end position="212"/>
    </location>
</feature>
<feature type="helix" evidence="15">
    <location>
        <begin position="217"/>
        <end position="219"/>
    </location>
</feature>
<feature type="helix" evidence="15">
    <location>
        <begin position="221"/>
        <end position="231"/>
    </location>
</feature>
<feature type="strand" evidence="15">
    <location>
        <begin position="234"/>
        <end position="236"/>
    </location>
</feature>
<feature type="helix" evidence="15">
    <location>
        <begin position="237"/>
        <end position="239"/>
    </location>
</feature>
<feature type="helix" evidence="15">
    <location>
        <begin position="240"/>
        <end position="245"/>
    </location>
</feature>
<feature type="strand" evidence="12">
    <location>
        <begin position="249"/>
        <end position="252"/>
    </location>
</feature>
<feature type="strand" evidence="15">
    <location>
        <begin position="260"/>
        <end position="264"/>
    </location>
</feature>
<feature type="strand" evidence="15">
    <location>
        <begin position="269"/>
        <end position="275"/>
    </location>
</feature>
<feature type="turn" evidence="13">
    <location>
        <begin position="277"/>
        <end position="279"/>
    </location>
</feature>
<feature type="strand" evidence="15">
    <location>
        <begin position="281"/>
        <end position="287"/>
    </location>
</feature>
<feature type="strand" evidence="15">
    <location>
        <begin position="291"/>
        <end position="297"/>
    </location>
</feature>
<feature type="strand" evidence="15">
    <location>
        <begin position="303"/>
        <end position="308"/>
    </location>
</feature>
<feature type="strand" evidence="13">
    <location>
        <begin position="309"/>
        <end position="311"/>
    </location>
</feature>
<feature type="strand" evidence="15">
    <location>
        <begin position="313"/>
        <end position="317"/>
    </location>
</feature>
<feature type="turn" evidence="15">
    <location>
        <begin position="319"/>
        <end position="321"/>
    </location>
</feature>
<feature type="strand" evidence="13">
    <location>
        <begin position="324"/>
        <end position="326"/>
    </location>
</feature>
<feature type="strand" evidence="15">
    <location>
        <begin position="338"/>
        <end position="342"/>
    </location>
</feature>
<feature type="turn" evidence="15">
    <location>
        <begin position="343"/>
        <end position="346"/>
    </location>
</feature>
<feature type="strand" evidence="15">
    <location>
        <begin position="347"/>
        <end position="354"/>
    </location>
</feature>
<feature type="strand" evidence="13">
    <location>
        <begin position="356"/>
        <end position="358"/>
    </location>
</feature>
<feature type="strand" evidence="15">
    <location>
        <begin position="360"/>
        <end position="368"/>
    </location>
</feature>
<feature type="turn" evidence="15">
    <location>
        <begin position="369"/>
        <end position="372"/>
    </location>
</feature>
<feature type="strand" evidence="15">
    <location>
        <begin position="373"/>
        <end position="376"/>
    </location>
</feature>
<feature type="strand" evidence="15">
    <location>
        <begin position="388"/>
        <end position="399"/>
    </location>
</feature>
<feature type="strand" evidence="15">
    <location>
        <begin position="402"/>
        <end position="404"/>
    </location>
</feature>
<feature type="turn" evidence="14">
    <location>
        <begin position="406"/>
        <end position="408"/>
    </location>
</feature>
<feature type="strand" evidence="15">
    <location>
        <begin position="410"/>
        <end position="412"/>
    </location>
</feature>
<feature type="strand" evidence="15">
    <location>
        <begin position="415"/>
        <end position="420"/>
    </location>
</feature>
<feature type="turn" evidence="15">
    <location>
        <begin position="421"/>
        <end position="424"/>
    </location>
</feature>
<feature type="strand" evidence="15">
    <location>
        <begin position="425"/>
        <end position="432"/>
    </location>
</feature>
<feature type="strand" evidence="15">
    <location>
        <begin position="439"/>
        <end position="444"/>
    </location>
</feature>
<feature type="strand" evidence="15">
    <location>
        <begin position="447"/>
        <end position="452"/>
    </location>
</feature>
<feature type="turn" evidence="15">
    <location>
        <begin position="453"/>
        <end position="455"/>
    </location>
</feature>
<feature type="strand" evidence="15">
    <location>
        <begin position="456"/>
        <end position="461"/>
    </location>
</feature>
<feature type="turn" evidence="15">
    <location>
        <begin position="462"/>
        <end position="465"/>
    </location>
</feature>
<feature type="strand" evidence="15">
    <location>
        <begin position="466"/>
        <end position="471"/>
    </location>
</feature>
<feature type="helix" evidence="15">
    <location>
        <begin position="474"/>
        <end position="476"/>
    </location>
</feature>
<feature type="strand" evidence="15">
    <location>
        <begin position="483"/>
        <end position="488"/>
    </location>
</feature>
<feature type="strand" evidence="15">
    <location>
        <begin position="491"/>
        <end position="498"/>
    </location>
</feature>
<feature type="strand" evidence="13">
    <location>
        <begin position="501"/>
        <end position="503"/>
    </location>
</feature>
<feature type="strand" evidence="15">
    <location>
        <begin position="506"/>
        <end position="510"/>
    </location>
</feature>
<feature type="turn" evidence="15">
    <location>
        <begin position="511"/>
        <end position="514"/>
    </location>
</feature>
<feature type="strand" evidence="15">
    <location>
        <begin position="515"/>
        <end position="519"/>
    </location>
</feature>
<feature type="strand" evidence="15">
    <location>
        <begin position="526"/>
        <end position="529"/>
    </location>
</feature>
<keyword id="KW-0002">3D-structure</keyword>
<keyword id="KW-0025">Alternative splicing</keyword>
<keyword id="KW-0880">Kelch repeat</keyword>
<keyword id="KW-1267">Proteomics identification</keyword>
<keyword id="KW-1185">Reference proteome</keyword>
<keyword id="KW-0677">Repeat</keyword>
<comment type="function">
    <text evidence="7 8">Substrate-specific adapter of a BCR (BTB-CUL3-RBX1) E3 ubiquitin ligase complex which targets CoREST corepressor complex components RCOR1, KDM1A/LSD1 and HDAC2 for proteasomal degradation (PubMed:33417871). RCOR1 is likely to be the primary target while degradation of KDM1A and HDAC2 is likely due to their association with RCOR1 (PubMed:33417871). Also targets RCOR3, MIER2 and MIER3 for proteasomal degradation as well as associated proteins ZNF217 and RREB1 (PubMed:36997086). Degradation is dependent on the presence of an ELM2 domain in the target proteins (PubMed:36997086).</text>
</comment>
<comment type="subunit">
    <text evidence="11">Component of the BCR(KBTBD4) E3 ubiquitin ligase complex, at least composed of CUL3, KBTBD4 and RBX1.</text>
</comment>
<comment type="interaction">
    <interactant intactId="EBI-25871195">
        <id>Q9NVX7-2</id>
    </interactant>
    <interactant intactId="EBI-930964">
        <id>P54253</id>
        <label>ATXN1</label>
    </interactant>
    <organismsDiffer>false</organismsDiffer>
    <experiments>6</experiments>
</comment>
<comment type="interaction">
    <interactant intactId="EBI-25871195">
        <id>Q9NVX7-2</id>
    </interactant>
    <interactant intactId="EBI-352682">
        <id>P04792</id>
        <label>HSPB1</label>
    </interactant>
    <organismsDiffer>false</organismsDiffer>
    <experiments>3</experiments>
</comment>
<comment type="interaction">
    <interactant intactId="EBI-25871195">
        <id>Q9NVX7-2</id>
    </interactant>
    <interactant intactId="EBI-10975473">
        <id>O60333-2</id>
        <label>KIF1B</label>
    </interactant>
    <organismsDiffer>false</organismsDiffer>
    <experiments>3</experiments>
</comment>
<comment type="interaction">
    <interactant intactId="EBI-25871195">
        <id>Q9NVX7-2</id>
    </interactant>
    <interactant intactId="EBI-988601">
        <id>O43933</id>
        <label>PEX1</label>
    </interactant>
    <organismsDiffer>false</organismsDiffer>
    <experiments>3</experiments>
</comment>
<comment type="interaction">
    <interactant intactId="EBI-25871195">
        <id>Q9NVX7-2</id>
    </interactant>
    <interactant intactId="EBI-21251460">
        <id>O60260-5</id>
        <label>PRKN</label>
    </interactant>
    <organismsDiffer>false</organismsDiffer>
    <experiments>3</experiments>
</comment>
<comment type="interaction">
    <interactant intactId="EBI-25871195">
        <id>Q9NVX7-2</id>
    </interactant>
    <interactant intactId="EBI-11047108">
        <id>P49768-2</id>
        <label>PSEN1</label>
    </interactant>
    <organismsDiffer>false</organismsDiffer>
    <experiments>3</experiments>
</comment>
<comment type="interaction">
    <interactant intactId="EBI-25871195">
        <id>Q9NVX7-2</id>
    </interactant>
    <interactant intactId="EBI-396669">
        <id>Q9Y3C5</id>
        <label>RNF11</label>
    </interactant>
    <organismsDiffer>false</organismsDiffer>
    <experiments>3</experiments>
</comment>
<comment type="interaction">
    <interactant intactId="EBI-25871195">
        <id>Q9NVX7-2</id>
    </interactant>
    <interactant intactId="EBI-990792">
        <id>P00441</id>
        <label>SOD1</label>
    </interactant>
    <organismsDiffer>false</organismsDiffer>
    <experiments>3</experiments>
</comment>
<comment type="interaction">
    <interactant intactId="EBI-25871195">
        <id>Q9NVX7-2</id>
    </interactant>
    <interactant intactId="EBI-372899">
        <id>Q13148</id>
        <label>TARDBP</label>
    </interactant>
    <organismsDiffer>false</organismsDiffer>
    <experiments>6</experiments>
</comment>
<comment type="interaction">
    <interactant intactId="EBI-25871195">
        <id>Q9NVX7-2</id>
    </interactant>
    <interactant intactId="EBI-720609">
        <id>O76024</id>
        <label>WFS1</label>
    </interactant>
    <organismsDiffer>false</organismsDiffer>
    <experiments>3</experiments>
</comment>
<comment type="alternative products">
    <event type="alternative splicing"/>
    <isoform>
        <id>Q9NVX7-2</id>
        <name>1</name>
        <sequence type="displayed"/>
    </isoform>
    <isoform>
        <id>Q9NVX7-1</id>
        <name>2</name>
        <sequence type="described" ref="VSP_062360"/>
    </isoform>
    <isoform>
        <id>Q9NVX7-3</id>
        <name>3</name>
        <sequence type="described" ref="VSP_062361"/>
    </isoform>
</comment>
<comment type="miscellaneous">
    <text evidence="7">As part of a BCR (BTB-CUL3-RBX1) E3 ubiquitin ligase complex, mediates the effects of the small molecule UM171 in enhancing hematopoietic stem and progenitor cell expansion ex vivo by specifically targeting the CoREST repressor complex for proteasomal degradation.</text>
</comment>
<protein>
    <recommendedName>
        <fullName>Kelch repeat and BTB domain-containing protein 4</fullName>
    </recommendedName>
    <alternativeName>
        <fullName>BTB and kelch domain-containing protein 4</fullName>
    </alternativeName>
</protein>
<organism>
    <name type="scientific">Homo sapiens</name>
    <name type="common">Human</name>
    <dbReference type="NCBI Taxonomy" id="9606"/>
    <lineage>
        <taxon>Eukaryota</taxon>
        <taxon>Metazoa</taxon>
        <taxon>Chordata</taxon>
        <taxon>Craniata</taxon>
        <taxon>Vertebrata</taxon>
        <taxon>Euteleostomi</taxon>
        <taxon>Mammalia</taxon>
        <taxon>Eutheria</taxon>
        <taxon>Euarchontoglires</taxon>
        <taxon>Primates</taxon>
        <taxon>Haplorrhini</taxon>
        <taxon>Catarrhini</taxon>
        <taxon>Hominidae</taxon>
        <taxon>Homo</taxon>
    </lineage>
</organism>
<proteinExistence type="evidence at protein level"/>
<evidence type="ECO:0000255" key="1"/>
<evidence type="ECO:0000255" key="2">
    <source>
        <dbReference type="PROSITE-ProRule" id="PRU00037"/>
    </source>
</evidence>
<evidence type="ECO:0000256" key="3">
    <source>
        <dbReference type="SAM" id="MobiDB-lite"/>
    </source>
</evidence>
<evidence type="ECO:0000269" key="4">
    <source>
    </source>
</evidence>
<evidence type="ECO:0000269" key="5">
    <source>
    </source>
</evidence>
<evidence type="ECO:0000269" key="6">
    <source>
    </source>
</evidence>
<evidence type="ECO:0000269" key="7">
    <source>
    </source>
</evidence>
<evidence type="ECO:0000269" key="8">
    <source>
    </source>
</evidence>
<evidence type="ECO:0000269" key="9">
    <source ref="2"/>
</evidence>
<evidence type="ECO:0000305" key="10"/>
<evidence type="ECO:0000305" key="11">
    <source>
    </source>
</evidence>
<evidence type="ECO:0007829" key="12">
    <source>
        <dbReference type="PDB" id="2EQX"/>
    </source>
</evidence>
<evidence type="ECO:0007829" key="13">
    <source>
        <dbReference type="PDB" id="8VPQ"/>
    </source>
</evidence>
<evidence type="ECO:0007829" key="14">
    <source>
        <dbReference type="PDB" id="8VRT"/>
    </source>
</evidence>
<evidence type="ECO:0007829" key="15">
    <source>
        <dbReference type="PDB" id="9DTQ"/>
    </source>
</evidence>
<reference key="1">
    <citation type="journal article" date="2004" name="Nat. Genet.">
        <title>Complete sequencing and characterization of 21,243 full-length human cDNAs.</title>
        <authorList>
            <person name="Ota T."/>
            <person name="Suzuki Y."/>
            <person name="Nishikawa T."/>
            <person name="Otsuki T."/>
            <person name="Sugiyama T."/>
            <person name="Irie R."/>
            <person name="Wakamatsu A."/>
            <person name="Hayashi K."/>
            <person name="Sato H."/>
            <person name="Nagai K."/>
            <person name="Kimura K."/>
            <person name="Makita H."/>
            <person name="Sekine M."/>
            <person name="Obayashi M."/>
            <person name="Nishi T."/>
            <person name="Shibahara T."/>
            <person name="Tanaka T."/>
            <person name="Ishii S."/>
            <person name="Yamamoto J."/>
            <person name="Saito K."/>
            <person name="Kawai Y."/>
            <person name="Isono Y."/>
            <person name="Nakamura Y."/>
            <person name="Nagahari K."/>
            <person name="Murakami K."/>
            <person name="Yasuda T."/>
            <person name="Iwayanagi T."/>
            <person name="Wagatsuma M."/>
            <person name="Shiratori A."/>
            <person name="Sudo H."/>
            <person name="Hosoiri T."/>
            <person name="Kaku Y."/>
            <person name="Kodaira H."/>
            <person name="Kondo H."/>
            <person name="Sugawara M."/>
            <person name="Takahashi M."/>
            <person name="Kanda K."/>
            <person name="Yokoi T."/>
            <person name="Furuya T."/>
            <person name="Kikkawa E."/>
            <person name="Omura Y."/>
            <person name="Abe K."/>
            <person name="Kamihara K."/>
            <person name="Katsuta N."/>
            <person name="Sato K."/>
            <person name="Tanikawa M."/>
            <person name="Yamazaki M."/>
            <person name="Ninomiya K."/>
            <person name="Ishibashi T."/>
            <person name="Yamashita H."/>
            <person name="Murakawa K."/>
            <person name="Fujimori K."/>
            <person name="Tanai H."/>
            <person name="Kimata M."/>
            <person name="Watanabe M."/>
            <person name="Hiraoka S."/>
            <person name="Chiba Y."/>
            <person name="Ishida S."/>
            <person name="Ono Y."/>
            <person name="Takiguchi S."/>
            <person name="Watanabe S."/>
            <person name="Yosida M."/>
            <person name="Hotuta T."/>
            <person name="Kusano J."/>
            <person name="Kanehori K."/>
            <person name="Takahashi-Fujii A."/>
            <person name="Hara H."/>
            <person name="Tanase T.-O."/>
            <person name="Nomura Y."/>
            <person name="Togiya S."/>
            <person name="Komai F."/>
            <person name="Hara R."/>
            <person name="Takeuchi K."/>
            <person name="Arita M."/>
            <person name="Imose N."/>
            <person name="Musashino K."/>
            <person name="Yuuki H."/>
            <person name="Oshima A."/>
            <person name="Sasaki N."/>
            <person name="Aotsuka S."/>
            <person name="Yoshikawa Y."/>
            <person name="Matsunawa H."/>
            <person name="Ichihara T."/>
            <person name="Shiohata N."/>
            <person name="Sano S."/>
            <person name="Moriya S."/>
            <person name="Momiyama H."/>
            <person name="Satoh N."/>
            <person name="Takami S."/>
            <person name="Terashima Y."/>
            <person name="Suzuki O."/>
            <person name="Nakagawa S."/>
            <person name="Senoh A."/>
            <person name="Mizoguchi H."/>
            <person name="Goto Y."/>
            <person name="Shimizu F."/>
            <person name="Wakebe H."/>
            <person name="Hishigaki H."/>
            <person name="Watanabe T."/>
            <person name="Sugiyama A."/>
            <person name="Takemoto M."/>
            <person name="Kawakami B."/>
            <person name="Yamazaki M."/>
            <person name="Watanabe K."/>
            <person name="Kumagai A."/>
            <person name="Itakura S."/>
            <person name="Fukuzumi Y."/>
            <person name="Fujimori Y."/>
            <person name="Komiyama M."/>
            <person name="Tashiro H."/>
            <person name="Tanigami A."/>
            <person name="Fujiwara T."/>
            <person name="Ono T."/>
            <person name="Yamada K."/>
            <person name="Fujii Y."/>
            <person name="Ozaki K."/>
            <person name="Hirao M."/>
            <person name="Ohmori Y."/>
            <person name="Kawabata A."/>
            <person name="Hikiji T."/>
            <person name="Kobatake N."/>
            <person name="Inagaki H."/>
            <person name="Ikema Y."/>
            <person name="Okamoto S."/>
            <person name="Okitani R."/>
            <person name="Kawakami T."/>
            <person name="Noguchi S."/>
            <person name="Itoh T."/>
            <person name="Shigeta K."/>
            <person name="Senba T."/>
            <person name="Matsumura K."/>
            <person name="Nakajima Y."/>
            <person name="Mizuno T."/>
            <person name="Morinaga M."/>
            <person name="Sasaki M."/>
            <person name="Togashi T."/>
            <person name="Oyama M."/>
            <person name="Hata H."/>
            <person name="Watanabe M."/>
            <person name="Komatsu T."/>
            <person name="Mizushima-Sugano J."/>
            <person name="Satoh T."/>
            <person name="Shirai Y."/>
            <person name="Takahashi Y."/>
            <person name="Nakagawa K."/>
            <person name="Okumura K."/>
            <person name="Nagase T."/>
            <person name="Nomura N."/>
            <person name="Kikuchi H."/>
            <person name="Masuho Y."/>
            <person name="Yamashita R."/>
            <person name="Nakai K."/>
            <person name="Yada T."/>
            <person name="Nakamura Y."/>
            <person name="Ohara O."/>
            <person name="Isogai T."/>
            <person name="Sugano S."/>
        </authorList>
    </citation>
    <scope>NUCLEOTIDE SEQUENCE [LARGE SCALE MRNA] (ISOFORMS 2 AND 3)</scope>
</reference>
<reference key="2">
    <citation type="submission" date="2004-06" db="EMBL/GenBank/DDBJ databases">
        <title>Cloning of human full open reading frames in Gateway(TM) system entry vector (pDONR201).</title>
        <authorList>
            <person name="Ebert L."/>
            <person name="Schick M."/>
            <person name="Neubert P."/>
            <person name="Schatten R."/>
            <person name="Henze S."/>
            <person name="Korn B."/>
        </authorList>
    </citation>
    <scope>NUCLEOTIDE SEQUENCE [LARGE SCALE MRNA] (ISOFORM 2)</scope>
</reference>
<reference key="3">
    <citation type="journal article" date="2007" name="BMC Genomics">
        <title>The full-ORF clone resource of the German cDNA consortium.</title>
        <authorList>
            <person name="Bechtel S."/>
            <person name="Rosenfelder H."/>
            <person name="Duda A."/>
            <person name="Schmidt C.P."/>
            <person name="Ernst U."/>
            <person name="Wellenreuther R."/>
            <person name="Mehrle A."/>
            <person name="Schuster C."/>
            <person name="Bahr A."/>
            <person name="Bloecker H."/>
            <person name="Heubner D."/>
            <person name="Hoerlein A."/>
            <person name="Michel G."/>
            <person name="Wedler H."/>
            <person name="Koehrer K."/>
            <person name="Ottenwaelder B."/>
            <person name="Poustka A."/>
            <person name="Wiemann S."/>
            <person name="Schupp I."/>
        </authorList>
    </citation>
    <scope>NUCLEOTIDE SEQUENCE [LARGE SCALE MRNA] (ISOFORM 2)</scope>
    <source>
        <tissue>Lymph node</tissue>
    </source>
</reference>
<reference key="4">
    <citation type="journal article" date="2006" name="Nature">
        <title>Human chromosome 11 DNA sequence and analysis including novel gene identification.</title>
        <authorList>
            <person name="Taylor T.D."/>
            <person name="Noguchi H."/>
            <person name="Totoki Y."/>
            <person name="Toyoda A."/>
            <person name="Kuroki Y."/>
            <person name="Dewar K."/>
            <person name="Lloyd C."/>
            <person name="Itoh T."/>
            <person name="Takeda T."/>
            <person name="Kim D.-W."/>
            <person name="She X."/>
            <person name="Barlow K.F."/>
            <person name="Bloom T."/>
            <person name="Bruford E."/>
            <person name="Chang J.L."/>
            <person name="Cuomo C.A."/>
            <person name="Eichler E."/>
            <person name="FitzGerald M.G."/>
            <person name="Jaffe D.B."/>
            <person name="LaButti K."/>
            <person name="Nicol R."/>
            <person name="Park H.-S."/>
            <person name="Seaman C."/>
            <person name="Sougnez C."/>
            <person name="Yang X."/>
            <person name="Zimmer A.R."/>
            <person name="Zody M.C."/>
            <person name="Birren B.W."/>
            <person name="Nusbaum C."/>
            <person name="Fujiyama A."/>
            <person name="Hattori M."/>
            <person name="Rogers J."/>
            <person name="Lander E.S."/>
            <person name="Sakaki Y."/>
        </authorList>
    </citation>
    <scope>NUCLEOTIDE SEQUENCE [LARGE SCALE GENOMIC DNA]</scope>
</reference>
<reference key="5">
    <citation type="submission" date="2005-09" db="EMBL/GenBank/DDBJ databases">
        <authorList>
            <person name="Mural R.J."/>
            <person name="Istrail S."/>
            <person name="Sutton G.G."/>
            <person name="Florea L."/>
            <person name="Halpern A.L."/>
            <person name="Mobarry C.M."/>
            <person name="Lippert R."/>
            <person name="Walenz B."/>
            <person name="Shatkay H."/>
            <person name="Dew I."/>
            <person name="Miller J.R."/>
            <person name="Flanigan M.J."/>
            <person name="Edwards N.J."/>
            <person name="Bolanos R."/>
            <person name="Fasulo D."/>
            <person name="Halldorsson B.V."/>
            <person name="Hannenhalli S."/>
            <person name="Turner R."/>
            <person name="Yooseph S."/>
            <person name="Lu F."/>
            <person name="Nusskern D.R."/>
            <person name="Shue B.C."/>
            <person name="Zheng X.H."/>
            <person name="Zhong F."/>
            <person name="Delcher A.L."/>
            <person name="Huson D.H."/>
            <person name="Kravitz S.A."/>
            <person name="Mouchard L."/>
            <person name="Reinert K."/>
            <person name="Remington K.A."/>
            <person name="Clark A.G."/>
            <person name="Waterman M.S."/>
            <person name="Eichler E.E."/>
            <person name="Adams M.D."/>
            <person name="Hunkapiller M.W."/>
            <person name="Myers E.W."/>
            <person name="Venter J.C."/>
        </authorList>
    </citation>
    <scope>NUCLEOTIDE SEQUENCE [LARGE SCALE GENOMIC DNA]</scope>
</reference>
<reference key="6">
    <citation type="journal article" date="2004" name="Genome Res.">
        <title>The status, quality, and expansion of the NIH full-length cDNA project: the Mammalian Gene Collection (MGC).</title>
        <authorList>
            <consortium name="The MGC Project Team"/>
        </authorList>
    </citation>
    <scope>NUCLEOTIDE SEQUENCE [LARGE SCALE MRNA] (ISOFORM 2)</scope>
    <source>
        <tissue>Brain</tissue>
    </source>
</reference>
<reference key="7">
    <citation type="journal article" date="2021" name="Cell Stem Cell">
        <title>UM171 Preserves Epigenetic Marks that Are Reduced in Ex Vivo Culture of Human HSCs via Potentiation of the CLR3-KBTBD4 Complex.</title>
        <authorList>
            <person name="Chagraoui J."/>
            <person name="Girard S."/>
            <person name="Spinella J.F."/>
            <person name="Simon L."/>
            <person name="Bonneil E."/>
            <person name="Mayotte N."/>
            <person name="MacRae T."/>
            <person name="Coulombe-Huntington J."/>
            <person name="Bertomeu T."/>
            <person name="Moison C."/>
            <person name="Tomellini E."/>
            <person name="Thibault P."/>
            <person name="Tyers M."/>
            <person name="Marinier A."/>
            <person name="Sauvageau G."/>
        </authorList>
    </citation>
    <scope>FUNCTION</scope>
    <scope>IDENTIFICATION IN THE BCR(KBTBD4) UBIQUITIN LIGASE COMPLEX</scope>
</reference>
<reference key="8">
    <citation type="journal article" date="2023" name="J. Biol. Chem.">
        <title>The stem cell-supporting small molecule UM171 triggers Cul3-KBTBD4-mediated degradation of ELM2 domain-harboring proteins.</title>
        <authorList>
            <person name="Zemaitis K."/>
            <person name="Ghosh S."/>
            <person name="Hansson J."/>
            <person name="Subramaniam A."/>
        </authorList>
    </citation>
    <scope>FUNCTION</scope>
</reference>
<reference key="9">
    <citation type="submission" date="2007-10" db="PDB data bank">
        <title>Solution structure of the back domain of KELCH repeat and BTB domain-containing protein 4.</title>
        <authorList>
            <consortium name="RIKEN structural genomics initiative (RSGI)"/>
        </authorList>
    </citation>
    <scope>STRUCTURE BY NMR OF 158-255</scope>
</reference>
<sequence>MKGGNADSWQREKLASMESPEEPGASMDENYFVNYTFKDRSHSGRVAQGIMKLCLEEELFADVTISVEGREFQLHRLVLSAQSCFFRSMFTSNLKEAHNRVIVLQDVSESVFQLLVDYIYHGTVKLRAEELQEIYEVSDMYQLTSLFEECSRFLARTVQVGNCLQVMWLADRHSDPELYTAAKHCAKTHLAQLQNTEEFLHLPHRLLTDIISDGVPCSQNPTEAIEAWINFNKEEREAFAESLRTSLKEIGENVHIYLIGKESSRTHSLAVSLHCAEDDSISVSGQNSLCHQITAACKHGGDLYVVGGSIPRRMWKCNNATVDWEWCAPLPRDRLQHTLVSVPGKDAIYSLGGKTLQDTLSNAVIYYRVGDNVWTETTQLEVAVSGAAGANLNGIIYLLGGEENDLDFFTKPSRLIQCFDTETDKCHVKPYVLPFAGRMHAAVHKDLVFIVAEGDSLVCYNPLLDSFTRLCLPEAWSSAPSLWKIASCNGSIYVFRDRYKKGDANTYKLDPATSAVTVTRGIKVLLTNLQFVLA</sequence>
<accession>Q9NVX7</accession>
<accession>A0A075B6T4</accession>
<accession>B3KRH9</accession>
<accession>D3DQS1</accession>
<accession>D3DQS2</accession>
<accession>Q6IA85</accession>
<accession>Q9BUC3</accession>
<accession>Q9NV76</accession>
<gene>
    <name type="primary">KBTBD4</name>
    <name type="synonym">BKLHD4</name>
</gene>
<dbReference type="EMBL" id="AK001312">
    <property type="protein sequence ID" value="BAA91616.1"/>
    <property type="molecule type" value="mRNA"/>
</dbReference>
<dbReference type="EMBL" id="AK001749">
    <property type="protein sequence ID" value="BAA91880.1"/>
    <property type="molecule type" value="mRNA"/>
</dbReference>
<dbReference type="EMBL" id="AK091607">
    <property type="protein sequence ID" value="BAG52391.1"/>
    <property type="molecule type" value="mRNA"/>
</dbReference>
<dbReference type="EMBL" id="CR457270">
    <property type="protein sequence ID" value="CAG33551.1"/>
    <property type="molecule type" value="mRNA"/>
</dbReference>
<dbReference type="EMBL" id="AL713735">
    <property type="protein sequence ID" value="CAD28521.1"/>
    <property type="molecule type" value="mRNA"/>
</dbReference>
<dbReference type="EMBL" id="AC104942">
    <property type="status" value="NOT_ANNOTATED_CDS"/>
    <property type="molecule type" value="Genomic_DNA"/>
</dbReference>
<dbReference type="EMBL" id="KF459542">
    <property type="status" value="NOT_ANNOTATED_CDS"/>
    <property type="molecule type" value="Genomic_DNA"/>
</dbReference>
<dbReference type="EMBL" id="CH471064">
    <property type="protein sequence ID" value="EAW67898.1"/>
    <property type="molecule type" value="Genomic_DNA"/>
</dbReference>
<dbReference type="EMBL" id="CH471064">
    <property type="protein sequence ID" value="EAW67899.1"/>
    <property type="molecule type" value="Genomic_DNA"/>
</dbReference>
<dbReference type="EMBL" id="CH471064">
    <property type="protein sequence ID" value="EAW67900.1"/>
    <property type="molecule type" value="Genomic_DNA"/>
</dbReference>
<dbReference type="EMBL" id="CH471064">
    <property type="protein sequence ID" value="EAW67901.1"/>
    <property type="molecule type" value="Genomic_DNA"/>
</dbReference>
<dbReference type="EMBL" id="CH471064">
    <property type="protein sequence ID" value="EAW67902.1"/>
    <property type="molecule type" value="Genomic_DNA"/>
</dbReference>
<dbReference type="EMBL" id="BC002736">
    <property type="protein sequence ID" value="AAH02736.1"/>
    <property type="molecule type" value="mRNA"/>
</dbReference>
<dbReference type="CCDS" id="CCDS44594.1">
    <molecule id="Q9NVX7-2"/>
</dbReference>
<dbReference type="CCDS" id="CCDS7940.1">
    <molecule id="Q9NVX7-1"/>
</dbReference>
<dbReference type="CCDS" id="CCDS81566.1">
    <molecule id="Q9NVX7-3"/>
</dbReference>
<dbReference type="RefSeq" id="NP_001305645.1">
    <property type="nucleotide sequence ID" value="NM_001318716.1"/>
</dbReference>
<dbReference type="RefSeq" id="NP_001305646.1">
    <property type="nucleotide sequence ID" value="NM_001318717.1"/>
</dbReference>
<dbReference type="RefSeq" id="NP_001305647.1">
    <molecule id="Q9NVX7-3"/>
    <property type="nucleotide sequence ID" value="NM_001318718.2"/>
</dbReference>
<dbReference type="RefSeq" id="NP_001305648.1">
    <property type="nucleotide sequence ID" value="NM_001318719.1"/>
</dbReference>
<dbReference type="RefSeq" id="NP_001305649.1">
    <property type="nucleotide sequence ID" value="NM_001318720.1"/>
</dbReference>
<dbReference type="RefSeq" id="NP_001305650.1">
    <molecule id="Q9NVX7-1"/>
    <property type="nucleotide sequence ID" value="NM_001318721.2"/>
</dbReference>
<dbReference type="RefSeq" id="NP_001305651.1">
    <molecule id="Q9NVX7-1"/>
    <property type="nucleotide sequence ID" value="NM_001318722.2"/>
</dbReference>
<dbReference type="RefSeq" id="NP_001305652.1">
    <molecule id="Q9NVX7-1"/>
    <property type="nucleotide sequence ID" value="NM_001318723.2"/>
</dbReference>
<dbReference type="RefSeq" id="NP_001305653.1">
    <molecule id="Q9NVX7-1"/>
    <property type="nucleotide sequence ID" value="NM_001318724.2"/>
</dbReference>
<dbReference type="RefSeq" id="NP_001305654.1">
    <molecule id="Q9NVX7-1"/>
    <property type="nucleotide sequence ID" value="NM_001318725.2"/>
</dbReference>
<dbReference type="RefSeq" id="NP_057590.3">
    <molecule id="Q9NVX7-1"/>
    <property type="nucleotide sequence ID" value="NM_016506.6"/>
</dbReference>
<dbReference type="RefSeq" id="NP_060565.4">
    <molecule id="Q9NVX7-2"/>
    <property type="nucleotide sequence ID" value="NM_018095.5"/>
</dbReference>
<dbReference type="PDB" id="2EQX">
    <property type="method" value="NMR"/>
    <property type="chains" value="A=158-255"/>
</dbReference>
<dbReference type="PDB" id="8VOJ">
    <property type="method" value="EM"/>
    <property type="resolution" value="3.77 A"/>
    <property type="chains" value="A/B=1-534"/>
</dbReference>
<dbReference type="PDB" id="8VPQ">
    <property type="method" value="EM"/>
    <property type="resolution" value="3.30 A"/>
    <property type="chains" value="A/B=1-534"/>
</dbReference>
<dbReference type="PDB" id="8VRT">
    <property type="method" value="EM"/>
    <property type="resolution" value="3.42 A"/>
    <property type="chains" value="A/B=17-534"/>
</dbReference>
<dbReference type="PDB" id="9DTG">
    <property type="method" value="EM"/>
    <property type="resolution" value="3.83 A"/>
    <property type="chains" value="A/B=1-534"/>
</dbReference>
<dbReference type="PDB" id="9DTQ">
    <property type="method" value="EM"/>
    <property type="resolution" value="2.87 A"/>
    <property type="chains" value="B/E=17-534"/>
</dbReference>
<dbReference type="PDBsum" id="2EQX"/>
<dbReference type="PDBsum" id="8VOJ"/>
<dbReference type="PDBsum" id="8VPQ"/>
<dbReference type="PDBsum" id="8VRT"/>
<dbReference type="PDBsum" id="9DTG"/>
<dbReference type="PDBsum" id="9DTQ"/>
<dbReference type="BMRB" id="Q9NVX7"/>
<dbReference type="EMDB" id="EMD-43386"/>
<dbReference type="EMDB" id="EMD-43413"/>
<dbReference type="EMDB" id="EMD-43487"/>
<dbReference type="EMDB" id="EMD-47155"/>
<dbReference type="EMDB" id="EMD-47156"/>
<dbReference type="SMR" id="Q9NVX7"/>
<dbReference type="BioGRID" id="120833">
    <property type="interactions" value="316"/>
</dbReference>
<dbReference type="ComplexPortal" id="CPX-8927">
    <property type="entry name" value="CRL3 E3 ubiquitin ligase complex, KBTBD4 variant"/>
</dbReference>
<dbReference type="FunCoup" id="Q9NVX7">
    <property type="interactions" value="1978"/>
</dbReference>
<dbReference type="IntAct" id="Q9NVX7">
    <property type="interactions" value="34"/>
</dbReference>
<dbReference type="MINT" id="Q9NVX7"/>
<dbReference type="STRING" id="9606.ENSP00000436713"/>
<dbReference type="GlyGen" id="Q9NVX7">
    <property type="glycosylation" value="1 site"/>
</dbReference>
<dbReference type="iPTMnet" id="Q9NVX7"/>
<dbReference type="PhosphoSitePlus" id="Q9NVX7"/>
<dbReference type="BioMuta" id="KBTBD4"/>
<dbReference type="DMDM" id="116242601"/>
<dbReference type="jPOST" id="Q9NVX7"/>
<dbReference type="MassIVE" id="Q9NVX7"/>
<dbReference type="PaxDb" id="9606-ENSP00000415106"/>
<dbReference type="PeptideAtlas" id="Q9NVX7"/>
<dbReference type="ProteomicsDB" id="82878">
    <molecule id="Q9NVX7-1"/>
</dbReference>
<dbReference type="ProteomicsDB" id="82879">
    <molecule id="Q9NVX7-2"/>
</dbReference>
<dbReference type="Pumba" id="Q9NVX7"/>
<dbReference type="Antibodypedia" id="48313">
    <property type="antibodies" value="86 antibodies from 13 providers"/>
</dbReference>
<dbReference type="DNASU" id="55709"/>
<dbReference type="Ensembl" id="ENST00000395288.6">
    <molecule id="Q9NVX7-1"/>
    <property type="protein sequence ID" value="ENSP00000378703.2"/>
    <property type="gene ID" value="ENSG00000123444.14"/>
</dbReference>
<dbReference type="Ensembl" id="ENST00000430070.7">
    <molecule id="Q9NVX7-2"/>
    <property type="protein sequence ID" value="ENSP00000415106.2"/>
    <property type="gene ID" value="ENSG00000123444.14"/>
</dbReference>
<dbReference type="Ensembl" id="ENST00000526005.5">
    <molecule id="Q9NVX7-1"/>
    <property type="protein sequence ID" value="ENSP00000433340.1"/>
    <property type="gene ID" value="ENSG00000123444.14"/>
</dbReference>
<dbReference type="Ensembl" id="ENST00000533290.5">
    <molecule id="Q9NVX7-3"/>
    <property type="protein sequence ID" value="ENSP00000436713.1"/>
    <property type="gene ID" value="ENSG00000123444.14"/>
</dbReference>
<dbReference type="Ensembl" id="ENST00000645388.1">
    <molecule id="Q9NVX7-1"/>
    <property type="protein sequence ID" value="ENSP00000495796.1"/>
    <property type="gene ID" value="ENSG00000284900.2"/>
</dbReference>
<dbReference type="Ensembl" id="ENST00000646317.1">
    <molecule id="Q9NVX7-1"/>
    <property type="protein sequence ID" value="ENSP00000495324.1"/>
    <property type="gene ID" value="ENSG00000284900.2"/>
</dbReference>
<dbReference type="Ensembl" id="ENST00000646479.1">
    <molecule id="Q9NVX7-3"/>
    <property type="protein sequence ID" value="ENSP00000495464.1"/>
    <property type="gene ID" value="ENSG00000284900.2"/>
</dbReference>
<dbReference type="Ensembl" id="ENST00000647201.2">
    <molecule id="Q9NVX7-2"/>
    <property type="protein sequence ID" value="ENSP00000495892.1"/>
    <property type="gene ID" value="ENSG00000284900.2"/>
</dbReference>
<dbReference type="GeneID" id="55709"/>
<dbReference type="KEGG" id="hsa:55709"/>
<dbReference type="MANE-Select" id="ENST00000430070.7">
    <property type="protein sequence ID" value="ENSP00000415106.2"/>
    <property type="RefSeq nucleotide sequence ID" value="NM_018095.6"/>
    <property type="RefSeq protein sequence ID" value="NP_060565.4"/>
</dbReference>
<dbReference type="UCSC" id="uc001nfx.4">
    <molecule id="Q9NVX7-2"/>
    <property type="organism name" value="human"/>
</dbReference>
<dbReference type="AGR" id="HGNC:23761"/>
<dbReference type="CTD" id="55709"/>
<dbReference type="DisGeNET" id="55709"/>
<dbReference type="GeneCards" id="KBTBD4"/>
<dbReference type="HGNC" id="HGNC:23761">
    <property type="gene designation" value="KBTBD4"/>
</dbReference>
<dbReference type="HPA" id="ENSG00000123444">
    <property type="expression patterns" value="Low tissue specificity"/>
</dbReference>
<dbReference type="MIM" id="617645">
    <property type="type" value="gene"/>
</dbReference>
<dbReference type="neXtProt" id="NX_Q9NVX7"/>
<dbReference type="OpenTargets" id="ENSG00000123444"/>
<dbReference type="PharmGKB" id="PA134883813"/>
<dbReference type="VEuPathDB" id="HostDB:ENSG00000123444"/>
<dbReference type="eggNOG" id="KOG4441">
    <property type="taxonomic scope" value="Eukaryota"/>
</dbReference>
<dbReference type="GeneTree" id="ENSGT00940000158775"/>
<dbReference type="HOGENOM" id="CLU_004253_14_6_1"/>
<dbReference type="InParanoid" id="Q9NVX7"/>
<dbReference type="OMA" id="CYVKPYV"/>
<dbReference type="OrthoDB" id="2311693at2759"/>
<dbReference type="PAN-GO" id="Q9NVX7">
    <property type="GO annotations" value="0 GO annotations based on evolutionary models"/>
</dbReference>
<dbReference type="PhylomeDB" id="Q9NVX7"/>
<dbReference type="TreeFam" id="TF330249"/>
<dbReference type="PathwayCommons" id="Q9NVX7"/>
<dbReference type="SignaLink" id="Q9NVX7"/>
<dbReference type="BioGRID-ORCS" id="55709">
    <property type="hits" value="28 hits in 1193 CRISPR screens"/>
</dbReference>
<dbReference type="ChiTaRS" id="KBTBD4">
    <property type="organism name" value="human"/>
</dbReference>
<dbReference type="EvolutionaryTrace" id="Q9NVX7"/>
<dbReference type="GenomeRNAi" id="55709"/>
<dbReference type="Pharos" id="Q9NVX7">
    <property type="development level" value="Tdark"/>
</dbReference>
<dbReference type="PRO" id="PR:Q9NVX7"/>
<dbReference type="Proteomes" id="UP000005640">
    <property type="component" value="Chromosome 11"/>
</dbReference>
<dbReference type="RNAct" id="Q9NVX7">
    <property type="molecule type" value="protein"/>
</dbReference>
<dbReference type="Bgee" id="ENSG00000123444">
    <property type="expression patterns" value="Expressed in islet of Langerhans and 110 other cell types or tissues"/>
</dbReference>
<dbReference type="ExpressionAtlas" id="Q9NVX7">
    <property type="expression patterns" value="baseline and differential"/>
</dbReference>
<dbReference type="CDD" id="cd18481">
    <property type="entry name" value="BACK_KBTBD4"/>
    <property type="match status" value="1"/>
</dbReference>
<dbReference type="CDD" id="cd18272">
    <property type="entry name" value="BTB_POZ_KBTBD4"/>
    <property type="match status" value="1"/>
</dbReference>
<dbReference type="Gene3D" id="1.25.40.420">
    <property type="match status" value="1"/>
</dbReference>
<dbReference type="Gene3D" id="2.120.10.80">
    <property type="entry name" value="Kelch-type beta propeller"/>
    <property type="match status" value="1"/>
</dbReference>
<dbReference type="Gene3D" id="3.30.710.10">
    <property type="entry name" value="Potassium Channel Kv1.1, Chain A"/>
    <property type="match status" value="1"/>
</dbReference>
<dbReference type="InterPro" id="IPR011705">
    <property type="entry name" value="BACK"/>
</dbReference>
<dbReference type="InterPro" id="IPR017096">
    <property type="entry name" value="BTB-kelch_protein"/>
</dbReference>
<dbReference type="InterPro" id="IPR000210">
    <property type="entry name" value="BTB/POZ_dom"/>
</dbReference>
<dbReference type="InterPro" id="IPR042884">
    <property type="entry name" value="KBTBD4"/>
</dbReference>
<dbReference type="InterPro" id="IPR042950">
    <property type="entry name" value="KBTBD4_BACK"/>
</dbReference>
<dbReference type="InterPro" id="IPR042949">
    <property type="entry name" value="KBTBD4_BTB_POZ"/>
</dbReference>
<dbReference type="InterPro" id="IPR015915">
    <property type="entry name" value="Kelch-typ_b-propeller"/>
</dbReference>
<dbReference type="InterPro" id="IPR011498">
    <property type="entry name" value="Kelch_2"/>
</dbReference>
<dbReference type="InterPro" id="IPR011333">
    <property type="entry name" value="SKP1/BTB/POZ_sf"/>
</dbReference>
<dbReference type="PANTHER" id="PTHR47195">
    <property type="entry name" value="KELCH REPEAT AND BTB DOMAIN-CONTAINING PROTEIN 4"/>
    <property type="match status" value="1"/>
</dbReference>
<dbReference type="PANTHER" id="PTHR47195:SF1">
    <property type="entry name" value="KELCH REPEAT AND BTB DOMAIN-CONTAINING PROTEIN 4"/>
    <property type="match status" value="1"/>
</dbReference>
<dbReference type="Pfam" id="PF07707">
    <property type="entry name" value="BACK"/>
    <property type="match status" value="1"/>
</dbReference>
<dbReference type="Pfam" id="PF00651">
    <property type="entry name" value="BTB"/>
    <property type="match status" value="1"/>
</dbReference>
<dbReference type="Pfam" id="PF07646">
    <property type="entry name" value="Kelch_2"/>
    <property type="match status" value="1"/>
</dbReference>
<dbReference type="PIRSF" id="PIRSF037037">
    <property type="entry name" value="Kelch-like_protein_gigaxonin"/>
    <property type="match status" value="1"/>
</dbReference>
<dbReference type="SMART" id="SM00875">
    <property type="entry name" value="BACK"/>
    <property type="match status" value="1"/>
</dbReference>
<dbReference type="SMART" id="SM00225">
    <property type="entry name" value="BTB"/>
    <property type="match status" value="1"/>
</dbReference>
<dbReference type="SUPFAM" id="SSF117281">
    <property type="entry name" value="Kelch motif"/>
    <property type="match status" value="1"/>
</dbReference>
<dbReference type="SUPFAM" id="SSF54695">
    <property type="entry name" value="POZ domain"/>
    <property type="match status" value="1"/>
</dbReference>
<dbReference type="PROSITE" id="PS50097">
    <property type="entry name" value="BTB"/>
    <property type="match status" value="1"/>
</dbReference>